<feature type="chain" id="PRO_0000352355" description="Inosose dehydratase 2">
    <location>
        <begin position="1"/>
        <end position="298"/>
    </location>
</feature>
<proteinExistence type="inferred from homology"/>
<keyword id="KW-0170">Cobalt</keyword>
<keyword id="KW-0456">Lyase</keyword>
<keyword id="KW-0464">Manganese</keyword>
<keyword id="KW-0614">Plasmid</keyword>
<organism>
    <name type="scientific">Bacillus cereus (strain ZK / E33L)</name>
    <dbReference type="NCBI Taxonomy" id="288681"/>
    <lineage>
        <taxon>Bacteria</taxon>
        <taxon>Bacillati</taxon>
        <taxon>Bacillota</taxon>
        <taxon>Bacilli</taxon>
        <taxon>Bacillales</taxon>
        <taxon>Bacillaceae</taxon>
        <taxon>Bacillus</taxon>
        <taxon>Bacillus cereus group</taxon>
    </lineage>
</organism>
<protein>
    <recommendedName>
        <fullName evidence="1">Inosose dehydratase 2</fullName>
        <ecNumber evidence="1">4.2.1.44</ecNumber>
    </recommendedName>
    <alternativeName>
        <fullName evidence="1">2-keto-myo-inositol dehydratase 2</fullName>
        <shortName evidence="1">2KMI dehydratase 2</shortName>
    </alternativeName>
</protein>
<geneLocation type="plasmid">
    <name>pE33L466</name>
</geneLocation>
<evidence type="ECO:0000255" key="1">
    <source>
        <dbReference type="HAMAP-Rule" id="MF_01672"/>
    </source>
</evidence>
<reference key="1">
    <citation type="journal article" date="2006" name="J. Bacteriol.">
        <title>Pathogenomic sequence analysis of Bacillus cereus and Bacillus thuringiensis isolates closely related to Bacillus anthracis.</title>
        <authorList>
            <person name="Han C.S."/>
            <person name="Xie G."/>
            <person name="Challacombe J.F."/>
            <person name="Altherr M.R."/>
            <person name="Bhotika S.S."/>
            <person name="Bruce D."/>
            <person name="Campbell C.S."/>
            <person name="Campbell M.L."/>
            <person name="Chen J."/>
            <person name="Chertkov O."/>
            <person name="Cleland C."/>
            <person name="Dimitrijevic M."/>
            <person name="Doggett N.A."/>
            <person name="Fawcett J.J."/>
            <person name="Glavina T."/>
            <person name="Goodwin L.A."/>
            <person name="Hill K.K."/>
            <person name="Hitchcock P."/>
            <person name="Jackson P.J."/>
            <person name="Keim P."/>
            <person name="Kewalramani A.R."/>
            <person name="Longmire J."/>
            <person name="Lucas S."/>
            <person name="Malfatti S."/>
            <person name="McMurry K."/>
            <person name="Meincke L.J."/>
            <person name="Misra M."/>
            <person name="Moseman B.L."/>
            <person name="Mundt M."/>
            <person name="Munk A.C."/>
            <person name="Okinaka R.T."/>
            <person name="Parson-Quintana B."/>
            <person name="Reilly L.P."/>
            <person name="Richardson P."/>
            <person name="Robinson D.L."/>
            <person name="Rubin E."/>
            <person name="Saunders E."/>
            <person name="Tapia R."/>
            <person name="Tesmer J.G."/>
            <person name="Thayer N."/>
            <person name="Thompson L.S."/>
            <person name="Tice H."/>
            <person name="Ticknor L.O."/>
            <person name="Wills P.L."/>
            <person name="Brettin T.S."/>
            <person name="Gilna P."/>
        </authorList>
    </citation>
    <scope>NUCLEOTIDE SEQUENCE [LARGE SCALE GENOMIC DNA]</scope>
    <source>
        <strain>ZK / E33L</strain>
    </source>
</reference>
<name>IOLE2_BACCZ</name>
<accession>Q4V1F4</accession>
<gene>
    <name evidence="1" type="primary">iolE2</name>
    <name type="ordered locus">pE33L466_0303</name>
</gene>
<sequence length="298" mass="33499">MFKENTIKLGIAPIAWTNDDMPELGAENTFEQCISEMALAGFNGSEVGNKYPRNTVVLKKSLELRNLEIASAWFSAFLTTKPLEETVQAFIKHRDFLHDMGAKVIVVSEQGHSIQGLMDVPLFKNKPVFTEEEWEKLADGLHHLGKLAQEKGLHIVYHHHMGTGVQTTAEIEKLMDMTDPELVSLLFDTGHLVFSGEEPLYILKKYLSRIKHVHLKDIRQEVVDAVKESDLSFLQAVKNGAFTVPGDGVIVFDEVFTILANSDYKGWFVVEAEQDPALANPFEYALKARKFIQEKAGL</sequence>
<comment type="function">
    <text evidence="1">Catalyzes the dehydration of inosose (2-keto-myo-inositol, 2KMI or 2,4,6/3,5-pentahydroxycyclohexanone) to 3D-(3,5/4)-trihydroxycyclohexane-1,2-dione (D-2,3-diketo-4-deoxy-epi-inositol).</text>
</comment>
<comment type="catalytic activity">
    <reaction evidence="1">
        <text>scyllo-inosose = 3D-3,5/4-trihydroxycyclohexane-1,2-dione + H2O</text>
        <dbReference type="Rhea" id="RHEA:14065"/>
        <dbReference type="ChEBI" id="CHEBI:15377"/>
        <dbReference type="ChEBI" id="CHEBI:17811"/>
        <dbReference type="ChEBI" id="CHEBI:28446"/>
        <dbReference type="EC" id="4.2.1.44"/>
    </reaction>
</comment>
<comment type="cofactor">
    <cofactor evidence="1">
        <name>glutathione</name>
        <dbReference type="ChEBI" id="CHEBI:57925"/>
    </cofactor>
</comment>
<comment type="cofactor">
    <cofactor evidence="1">
        <name>Co(2+)</name>
        <dbReference type="ChEBI" id="CHEBI:48828"/>
    </cofactor>
    <cofactor evidence="1">
        <name>Mn(2+)</name>
        <dbReference type="ChEBI" id="CHEBI:29035"/>
    </cofactor>
</comment>
<comment type="pathway">
    <text evidence="1">Polyol metabolism; myo-inositol degradation into acetyl-CoA; acetyl-CoA from myo-inositol: step 2/7.</text>
</comment>
<comment type="similarity">
    <text evidence="1">Belongs to the IolE/MocC family.</text>
</comment>
<dbReference type="EC" id="4.2.1.44" evidence="1"/>
<dbReference type="EMBL" id="CP000040">
    <property type="protein sequence ID" value="AAY60453.1"/>
    <property type="molecule type" value="Genomic_DNA"/>
</dbReference>
<dbReference type="RefSeq" id="WP_000471974.1">
    <property type="nucleotide sequence ID" value="NC_007103.1"/>
</dbReference>
<dbReference type="SMR" id="Q4V1F4"/>
<dbReference type="KEGG" id="bcz:pE33L466_0303"/>
<dbReference type="PATRIC" id="fig|288681.22.peg.5503"/>
<dbReference type="UniPathway" id="UPA00076">
    <property type="reaction ID" value="UER00144"/>
</dbReference>
<dbReference type="Proteomes" id="UP000002612">
    <property type="component" value="Plasmid pE33L466"/>
</dbReference>
<dbReference type="GO" id="GO:0030145">
    <property type="term" value="F:manganese ion binding"/>
    <property type="evidence" value="ECO:0007669"/>
    <property type="project" value="UniProtKB-UniRule"/>
</dbReference>
<dbReference type="GO" id="GO:0050114">
    <property type="term" value="F:myo-inosose-2 dehydratase activity"/>
    <property type="evidence" value="ECO:0007669"/>
    <property type="project" value="UniProtKB-UniRule"/>
</dbReference>
<dbReference type="GO" id="GO:0019310">
    <property type="term" value="P:inositol catabolic process"/>
    <property type="evidence" value="ECO:0007669"/>
    <property type="project" value="UniProtKB-UniRule"/>
</dbReference>
<dbReference type="Gene3D" id="3.20.20.150">
    <property type="entry name" value="Divalent-metal-dependent TIM barrel enzymes"/>
    <property type="match status" value="1"/>
</dbReference>
<dbReference type="HAMAP" id="MF_01672">
    <property type="entry name" value="IolE"/>
    <property type="match status" value="1"/>
</dbReference>
<dbReference type="InterPro" id="IPR023952">
    <property type="entry name" value="IolE"/>
</dbReference>
<dbReference type="InterPro" id="IPR030823">
    <property type="entry name" value="IolE/MocC"/>
</dbReference>
<dbReference type="InterPro" id="IPR050312">
    <property type="entry name" value="IolE/XylAMocC-like"/>
</dbReference>
<dbReference type="InterPro" id="IPR036237">
    <property type="entry name" value="Xyl_isomerase-like_sf"/>
</dbReference>
<dbReference type="InterPro" id="IPR013022">
    <property type="entry name" value="Xyl_isomerase-like_TIM-brl"/>
</dbReference>
<dbReference type="NCBIfam" id="TIGR04379">
    <property type="entry name" value="myo_inos_iolE"/>
    <property type="match status" value="1"/>
</dbReference>
<dbReference type="PANTHER" id="PTHR12110">
    <property type="entry name" value="HYDROXYPYRUVATE ISOMERASE"/>
    <property type="match status" value="1"/>
</dbReference>
<dbReference type="PANTHER" id="PTHR12110:SF41">
    <property type="entry name" value="INOSOSE DEHYDRATASE"/>
    <property type="match status" value="1"/>
</dbReference>
<dbReference type="Pfam" id="PF01261">
    <property type="entry name" value="AP_endonuc_2"/>
    <property type="match status" value="1"/>
</dbReference>
<dbReference type="SUPFAM" id="SSF51658">
    <property type="entry name" value="Xylose isomerase-like"/>
    <property type="match status" value="1"/>
</dbReference>